<protein>
    <recommendedName>
        <fullName evidence="1">DNA mismatch repair protein MutS</fullName>
    </recommendedName>
</protein>
<gene>
    <name evidence="1" type="primary">mutS</name>
    <name type="ordered locus">BOV_0142</name>
</gene>
<keyword id="KW-0067">ATP-binding</keyword>
<keyword id="KW-0227">DNA damage</keyword>
<keyword id="KW-0234">DNA repair</keyword>
<keyword id="KW-0238">DNA-binding</keyword>
<keyword id="KW-0547">Nucleotide-binding</keyword>
<feature type="chain" id="PRO_0000335124" description="DNA mismatch repair protein MutS">
    <location>
        <begin position="1"/>
        <end position="898"/>
    </location>
</feature>
<feature type="binding site" evidence="1">
    <location>
        <begin position="646"/>
        <end position="653"/>
    </location>
    <ligand>
        <name>ATP</name>
        <dbReference type="ChEBI" id="CHEBI:30616"/>
    </ligand>
</feature>
<proteinExistence type="inferred from homology"/>
<dbReference type="EMBL" id="CP000708">
    <property type="protein sequence ID" value="ABQ61097.1"/>
    <property type="molecule type" value="Genomic_DNA"/>
</dbReference>
<dbReference type="SMR" id="A5VN83"/>
<dbReference type="KEGG" id="bov:BOV_0142"/>
<dbReference type="HOGENOM" id="CLU_002472_4_0_5"/>
<dbReference type="Proteomes" id="UP000006383">
    <property type="component" value="Chromosome I"/>
</dbReference>
<dbReference type="GO" id="GO:0005829">
    <property type="term" value="C:cytosol"/>
    <property type="evidence" value="ECO:0007669"/>
    <property type="project" value="TreeGrafter"/>
</dbReference>
<dbReference type="GO" id="GO:0005524">
    <property type="term" value="F:ATP binding"/>
    <property type="evidence" value="ECO:0007669"/>
    <property type="project" value="UniProtKB-UniRule"/>
</dbReference>
<dbReference type="GO" id="GO:0140664">
    <property type="term" value="F:ATP-dependent DNA damage sensor activity"/>
    <property type="evidence" value="ECO:0007669"/>
    <property type="project" value="InterPro"/>
</dbReference>
<dbReference type="GO" id="GO:0003684">
    <property type="term" value="F:damaged DNA binding"/>
    <property type="evidence" value="ECO:0007669"/>
    <property type="project" value="UniProtKB-UniRule"/>
</dbReference>
<dbReference type="GO" id="GO:0030983">
    <property type="term" value="F:mismatched DNA binding"/>
    <property type="evidence" value="ECO:0007669"/>
    <property type="project" value="InterPro"/>
</dbReference>
<dbReference type="GO" id="GO:0006298">
    <property type="term" value="P:mismatch repair"/>
    <property type="evidence" value="ECO:0007669"/>
    <property type="project" value="UniProtKB-UniRule"/>
</dbReference>
<dbReference type="CDD" id="cd03284">
    <property type="entry name" value="ABC_MutS1"/>
    <property type="match status" value="1"/>
</dbReference>
<dbReference type="FunFam" id="3.40.1170.10:FF:000001">
    <property type="entry name" value="DNA mismatch repair protein MutS"/>
    <property type="match status" value="1"/>
</dbReference>
<dbReference type="FunFam" id="3.40.50.300:FF:000870">
    <property type="entry name" value="MutS protein homolog 4"/>
    <property type="match status" value="1"/>
</dbReference>
<dbReference type="Gene3D" id="1.10.1420.10">
    <property type="match status" value="2"/>
</dbReference>
<dbReference type="Gene3D" id="6.10.140.430">
    <property type="match status" value="1"/>
</dbReference>
<dbReference type="Gene3D" id="3.40.1170.10">
    <property type="entry name" value="DNA repair protein MutS, domain I"/>
    <property type="match status" value="1"/>
</dbReference>
<dbReference type="Gene3D" id="3.30.420.110">
    <property type="entry name" value="MutS, connector domain"/>
    <property type="match status" value="1"/>
</dbReference>
<dbReference type="Gene3D" id="3.40.50.300">
    <property type="entry name" value="P-loop containing nucleotide triphosphate hydrolases"/>
    <property type="match status" value="1"/>
</dbReference>
<dbReference type="HAMAP" id="MF_00096">
    <property type="entry name" value="MutS"/>
    <property type="match status" value="1"/>
</dbReference>
<dbReference type="InterPro" id="IPR005748">
    <property type="entry name" value="DNA_mismatch_repair_MutS"/>
</dbReference>
<dbReference type="InterPro" id="IPR007695">
    <property type="entry name" value="DNA_mismatch_repair_MutS-lik_N"/>
</dbReference>
<dbReference type="InterPro" id="IPR017261">
    <property type="entry name" value="DNA_mismatch_repair_MutS/MSH"/>
</dbReference>
<dbReference type="InterPro" id="IPR000432">
    <property type="entry name" value="DNA_mismatch_repair_MutS_C"/>
</dbReference>
<dbReference type="InterPro" id="IPR007861">
    <property type="entry name" value="DNA_mismatch_repair_MutS_clamp"/>
</dbReference>
<dbReference type="InterPro" id="IPR007696">
    <property type="entry name" value="DNA_mismatch_repair_MutS_core"/>
</dbReference>
<dbReference type="InterPro" id="IPR016151">
    <property type="entry name" value="DNA_mismatch_repair_MutS_N"/>
</dbReference>
<dbReference type="InterPro" id="IPR036187">
    <property type="entry name" value="DNA_mismatch_repair_MutS_sf"/>
</dbReference>
<dbReference type="InterPro" id="IPR007860">
    <property type="entry name" value="DNA_mmatch_repair_MutS_con_dom"/>
</dbReference>
<dbReference type="InterPro" id="IPR045076">
    <property type="entry name" value="MutS"/>
</dbReference>
<dbReference type="InterPro" id="IPR036678">
    <property type="entry name" value="MutS_con_dom_sf"/>
</dbReference>
<dbReference type="InterPro" id="IPR027417">
    <property type="entry name" value="P-loop_NTPase"/>
</dbReference>
<dbReference type="NCBIfam" id="TIGR01070">
    <property type="entry name" value="mutS1"/>
    <property type="match status" value="1"/>
</dbReference>
<dbReference type="NCBIfam" id="NF003810">
    <property type="entry name" value="PRK05399.1"/>
    <property type="match status" value="1"/>
</dbReference>
<dbReference type="PANTHER" id="PTHR11361:SF34">
    <property type="entry name" value="DNA MISMATCH REPAIR PROTEIN MSH1, MITOCHONDRIAL"/>
    <property type="match status" value="1"/>
</dbReference>
<dbReference type="PANTHER" id="PTHR11361">
    <property type="entry name" value="DNA MISMATCH REPAIR PROTEIN MUTS FAMILY MEMBER"/>
    <property type="match status" value="1"/>
</dbReference>
<dbReference type="Pfam" id="PF01624">
    <property type="entry name" value="MutS_I"/>
    <property type="match status" value="1"/>
</dbReference>
<dbReference type="Pfam" id="PF05188">
    <property type="entry name" value="MutS_II"/>
    <property type="match status" value="1"/>
</dbReference>
<dbReference type="Pfam" id="PF05192">
    <property type="entry name" value="MutS_III"/>
    <property type="match status" value="1"/>
</dbReference>
<dbReference type="Pfam" id="PF05190">
    <property type="entry name" value="MutS_IV"/>
    <property type="match status" value="1"/>
</dbReference>
<dbReference type="Pfam" id="PF00488">
    <property type="entry name" value="MutS_V"/>
    <property type="match status" value="1"/>
</dbReference>
<dbReference type="PIRSF" id="PIRSF037677">
    <property type="entry name" value="DNA_mis_repair_Msh6"/>
    <property type="match status" value="1"/>
</dbReference>
<dbReference type="SMART" id="SM00534">
    <property type="entry name" value="MUTSac"/>
    <property type="match status" value="1"/>
</dbReference>
<dbReference type="SMART" id="SM00533">
    <property type="entry name" value="MUTSd"/>
    <property type="match status" value="1"/>
</dbReference>
<dbReference type="SUPFAM" id="SSF55271">
    <property type="entry name" value="DNA repair protein MutS, domain I"/>
    <property type="match status" value="1"/>
</dbReference>
<dbReference type="SUPFAM" id="SSF53150">
    <property type="entry name" value="DNA repair protein MutS, domain II"/>
    <property type="match status" value="1"/>
</dbReference>
<dbReference type="SUPFAM" id="SSF48334">
    <property type="entry name" value="DNA repair protein MutS, domain III"/>
    <property type="match status" value="1"/>
</dbReference>
<dbReference type="SUPFAM" id="SSF52540">
    <property type="entry name" value="P-loop containing nucleoside triphosphate hydrolases"/>
    <property type="match status" value="1"/>
</dbReference>
<dbReference type="PROSITE" id="PS00486">
    <property type="entry name" value="DNA_MISMATCH_REPAIR_2"/>
    <property type="match status" value="1"/>
</dbReference>
<reference key="1">
    <citation type="journal article" date="2009" name="PLoS ONE">
        <title>Genome degradation in Brucella ovis corresponds with narrowing of its host range and tissue tropism.</title>
        <authorList>
            <person name="Tsolis R.M."/>
            <person name="Seshadri R."/>
            <person name="Santos R.L."/>
            <person name="Sangari F.J."/>
            <person name="Lobo J.M."/>
            <person name="de Jong M.F."/>
            <person name="Ren Q."/>
            <person name="Myers G."/>
            <person name="Brinkac L.M."/>
            <person name="Nelson W.C."/>
            <person name="Deboy R.T."/>
            <person name="Angiuoli S."/>
            <person name="Khouri H."/>
            <person name="Dimitrov G."/>
            <person name="Robinson J.R."/>
            <person name="Mulligan S."/>
            <person name="Walker R.L."/>
            <person name="Elzer P.E."/>
            <person name="Hassan K.A."/>
            <person name="Paulsen I.T."/>
        </authorList>
    </citation>
    <scope>NUCLEOTIDE SEQUENCE [LARGE SCALE GENOMIC DNA]</scope>
    <source>
        <strain>ATCC 25840 / 63/290 / NCTC 10512</strain>
    </source>
</reference>
<name>MUTS_BRUO2</name>
<sequence length="898" mass="97440">MENAGPDAPVRLTPMMEQYIEIKAANVDSLLFYRMGDFYELFFDDAVAASAALGITLTKRGKHLGEDIPMCGVPVHAADDYLQKLIAKGYRVAVCEQVEDPAEAKKRGSKSVVKRDVIRLVTPGTLTEEKLLDPAQANFLMAMGRTRGDGALALAWIDISTGTFRVAETTPDRLFADIMRVDPRELVVADSAFHDEELRPVFDLIGKAVTPQPATLFDSAAAQTRIQHYFNVATLDGFGQFSRPELSAISGAIAYIEKTQISERPPLMRPEREHEGGTLFIDPATRASLELARTMSGKRDGSLLKAIDRTVTGGGARLLAERLTAPLTSPKEIAPRLDSVSWCLSEQTLCEALRLELKGVPDMPRALSRLAVGRGGPRDLGALACGFEAAGGIASLLDGALLPDELAAAREAIEKMPAGFAAHLDRALADELPLLKRDGGFVREGYNSELDEMRALRDQSRRVIAGLQADYIEETGIKSLKIKHNNVLGYFIEVTANNSGAMTDTDEAKSRFIHRQTMANAMRFTTTELAELESKIANAADRALSIELAIFEELTAEAVAHADSIRAAASALSVFDVSTALAVLAEEQGYCRPHVDDSLSFNIVAGRHPVVEQALRRQAANPFVANDCDLSPQRDGGDGAIWLLTGPNMGGKSTFLRQNALIAILAQMGSFVPAGSAHIGVVDRLFSRVGASDDLARGRSTFMVEMVETAAILNQAGEHSLVILDEIGRGTATFDGLSIAWAAVEYLHEKNRCRALFATHFHEMTALSEKLERLSNVTMRVKEWDNDVIFLHEVAKGAADRSYGVQVARLAGLPEAVVNRARDVLHQLEAGETSGKADRLIDDLPLFSVMLQQEKPKPQIQAKDSELANAVAAISPDELTPREALDLIYKLKELAGKA</sequence>
<organism>
    <name type="scientific">Brucella ovis (strain ATCC 25840 / 63/290 / NCTC 10512)</name>
    <dbReference type="NCBI Taxonomy" id="444178"/>
    <lineage>
        <taxon>Bacteria</taxon>
        <taxon>Pseudomonadati</taxon>
        <taxon>Pseudomonadota</taxon>
        <taxon>Alphaproteobacteria</taxon>
        <taxon>Hyphomicrobiales</taxon>
        <taxon>Brucellaceae</taxon>
        <taxon>Brucella/Ochrobactrum group</taxon>
        <taxon>Brucella</taxon>
    </lineage>
</organism>
<evidence type="ECO:0000255" key="1">
    <source>
        <dbReference type="HAMAP-Rule" id="MF_00096"/>
    </source>
</evidence>
<accession>A5VN83</accession>
<comment type="function">
    <text evidence="1">This protein is involved in the repair of mismatches in DNA. It is possible that it carries out the mismatch recognition step. This protein has a weak ATPase activity.</text>
</comment>
<comment type="similarity">
    <text evidence="1">Belongs to the DNA mismatch repair MutS family.</text>
</comment>